<gene>
    <name evidence="9" type="primary">pduU</name>
    <name type="ordered locus">STM2055</name>
</gene>
<comment type="function">
    <text evidence="3 5 11">A minor shell protein of the bacterial microcompartment (BMC) dedicated to 1,2-propanediol (1,2-PD) degradation. The isolated BMC shell component protein ratio for J:A:B':B:K:T:U is approximately 15:10:7:6:1:1:2 (PubMed:12923081). Not required for structural integrity of BMCs nor to mitigate propionaldehyde toxicity, may selectively transport specific metabolites (PubMed:21239588). Proteins such as this one with circularly permuted BMC domains may play a key role in conferring heterogeneity and flexibility in this BMC (Probable).</text>
</comment>
<comment type="function">
    <text evidence="14">The 1,2-PD-specific bacterial microcompartment (BMC) concentrates low levels of 1,2-PD catabolic enzymes, concentrates volatile reaction intermediates thus enhancing pathway flux and keeps the level of toxic, mutagenic propionaldehyde low.</text>
</comment>
<comment type="pathway">
    <text evidence="12">Polyol metabolism; 1,2-propanediol degradation.</text>
</comment>
<comment type="subunit">
    <text evidence="4 7">Homohexamer with a central pore lined by a beta-barrel. Hexamers pack into a loose array (PubMed:18786396). Interacts with PduV, probably via the beta-barrel which is predicted by modeling to be on the exterior of the BMC (PubMed:25646976).</text>
</comment>
<comment type="subcellular location">
    <subcellularLocation>
        <location evidence="3 8">Bacterial microcompartment</location>
    </subcellularLocation>
    <text evidence="4 11 13">The N- and C-terminii are on the convex side of the hexamer, probably inside the BMC (Probable) (PubMed:18786396). Modeling suggests the beta-barrel is on the exterior of the BMC where it interacts with PduV (Probable).</text>
</comment>
<comment type="induction">
    <text evidence="2">BMC production is induced by growth on 1,2-PD vitamin B12 medium.</text>
</comment>
<comment type="domain">
    <text evidence="4">One side of the hexamer is concave which is lined by hydrophobic residues, the other side has a slightly protruding, 6-stranded beta-barrel which is occluded in PDB:3CGI by side chains.</text>
</comment>
<comment type="disruption phenotype">
    <text evidence="5">No visible effect on BMC morphology. Slight growth impairment on 1,2-propanediol and vitamin B12.</text>
</comment>
<comment type="biotechnology">
    <text evidence="6">Artificial BMCs can be made in E.coli by expressing pduA-pduB/B'-pduT-pduU-pduN-pduJ-pduK (in this order). Enzymes can be targeted to the BMC, and appear to be encapsulated within it.</text>
</comment>
<comment type="miscellaneous">
    <text evidence="2 3">Bacterial microcompartments (BMC) 100-200 nm in cross section are formed during aerobic growth on minimal 1,2-PD-B12 or anaerobic growth on 1,2-PD-tetrathionate medium, but not during aerobic growth on glucose, anerobic growth on glucose or pyruvate-tetrathionate (PubMed:10498708). BMCs can constitute up to 10% of total cell protein (PubMed:12923081).</text>
</comment>
<comment type="similarity">
    <text evidence="1 11">Belongs to the EutS/PduU family.</text>
</comment>
<keyword id="KW-0002">3D-structure</keyword>
<keyword id="KW-1283">Bacterial microcompartment</keyword>
<keyword id="KW-1185">Reference proteome</keyword>
<keyword id="KW-0813">Transport</keyword>
<feature type="chain" id="PRO_0000201526" description="Bacterial microcompartment shell protein PduU">
    <location>
        <begin position="1"/>
        <end position="116"/>
    </location>
</feature>
<feature type="domain" description="BMC circularly permuted" evidence="1">
    <location>
        <begin position="9"/>
        <end position="108"/>
    </location>
</feature>
<feature type="strand" evidence="16">
    <location>
        <begin position="9"/>
        <end position="14"/>
    </location>
</feature>
<feature type="strand" evidence="16">
    <location>
        <begin position="19"/>
        <end position="28"/>
    </location>
</feature>
<feature type="helix" evidence="16">
    <location>
        <begin position="31"/>
        <end position="36"/>
    </location>
</feature>
<feature type="strand" evidence="16">
    <location>
        <begin position="45"/>
        <end position="53"/>
    </location>
</feature>
<feature type="helix" evidence="16">
    <location>
        <begin position="56"/>
        <end position="66"/>
    </location>
</feature>
<feature type="strand" evidence="16">
    <location>
        <begin position="67"/>
        <end position="76"/>
    </location>
</feature>
<feature type="turn" evidence="16">
    <location>
        <begin position="77"/>
        <end position="80"/>
    </location>
</feature>
<feature type="strand" evidence="16">
    <location>
        <begin position="81"/>
        <end position="86"/>
    </location>
</feature>
<feature type="helix" evidence="16">
    <location>
        <begin position="88"/>
        <end position="106"/>
    </location>
</feature>
<feature type="strand" evidence="16">
    <location>
        <begin position="114"/>
        <end position="116"/>
    </location>
</feature>
<organism>
    <name type="scientific">Salmonella typhimurium (strain LT2 / SGSC1412 / ATCC 700720)</name>
    <dbReference type="NCBI Taxonomy" id="99287"/>
    <lineage>
        <taxon>Bacteria</taxon>
        <taxon>Pseudomonadati</taxon>
        <taxon>Pseudomonadota</taxon>
        <taxon>Gammaproteobacteria</taxon>
        <taxon>Enterobacterales</taxon>
        <taxon>Enterobacteriaceae</taxon>
        <taxon>Salmonella</taxon>
    </lineage>
</organism>
<sequence>MERQPTTDRMIQEYVPGKQVTLAHLIANPGKDLFKKLGLQDAVSAIGILTITPSEASIIACDIATKSGAVEIGFLDRFTGAVVLTGDVSAVEYALKQVTRTLGEMMQFTTCSITRT</sequence>
<reference key="1">
    <citation type="journal article" date="1999" name="J. Bacteriol.">
        <title>The propanediol utilization (pdu) operon of Salmonella enterica serovar typhimurium LT2 includes genes necessary for formation of polyhedral organelles involved in coenzyme B(12)-dependent 1, 2-propanediol degradation.</title>
        <authorList>
            <person name="Bobik T.A."/>
            <person name="Havemann G.D."/>
            <person name="Busch R.J."/>
            <person name="Williams D.S."/>
            <person name="Aldrich H.C."/>
        </authorList>
    </citation>
    <scope>NUCLEOTIDE SEQUENCE [GENOMIC DNA]</scope>
    <scope>PATHWAY</scope>
    <scope>INDUCTION</scope>
    <source>
        <strain>LT2</strain>
    </source>
</reference>
<reference key="2">
    <citation type="journal article" date="2001" name="Nature">
        <title>Complete genome sequence of Salmonella enterica serovar Typhimurium LT2.</title>
        <authorList>
            <person name="McClelland M."/>
            <person name="Sanderson K.E."/>
            <person name="Spieth J."/>
            <person name="Clifton S.W."/>
            <person name="Latreille P."/>
            <person name="Courtney L."/>
            <person name="Porwollik S."/>
            <person name="Ali J."/>
            <person name="Dante M."/>
            <person name="Du F."/>
            <person name="Hou S."/>
            <person name="Layman D."/>
            <person name="Leonard S."/>
            <person name="Nguyen C."/>
            <person name="Scott K."/>
            <person name="Holmes A."/>
            <person name="Grewal N."/>
            <person name="Mulvaney E."/>
            <person name="Ryan E."/>
            <person name="Sun H."/>
            <person name="Florea L."/>
            <person name="Miller W."/>
            <person name="Stoneking T."/>
            <person name="Nhan M."/>
            <person name="Waterston R."/>
            <person name="Wilson R.K."/>
        </authorList>
    </citation>
    <scope>NUCLEOTIDE SEQUENCE [LARGE SCALE GENOMIC DNA]</scope>
    <source>
        <strain>LT2 / SGSC1412 / ATCC 700720</strain>
    </source>
</reference>
<reference key="3">
    <citation type="journal article" date="2003" name="J. Bacteriol.">
        <title>Protein content of polyhedral organelles involved in coenzyme B12-dependent degradation of 1,2-propanediol in Salmonella enterica serovar Typhimurium LT2.</title>
        <authorList>
            <person name="Havemann G.D."/>
            <person name="Bobik T.A."/>
        </authorList>
    </citation>
    <scope>IDENTIFICATION BY MASS SPECTROMETRY</scope>
    <scope>FUNCTION</scope>
    <scope>SUBCELLULAR LOCATION</scope>
    <source>
        <strain>LT2</strain>
    </source>
</reference>
<reference key="4">
    <citation type="journal article" date="2011" name="J. Bacteriol.">
        <title>Genetic analysis of the protein shell of the microcompartments involved in coenzyme B12-dependent 1,2-propanediol degradation by Salmonella.</title>
        <authorList>
            <person name="Cheng S."/>
            <person name="Sinha S."/>
            <person name="Fan C."/>
            <person name="Liu Y."/>
            <person name="Bobik T.A."/>
        </authorList>
    </citation>
    <scope>FUNCTION</scope>
    <scope>DISRUPTION PHENOTYPE</scope>
    <source>
        <strain>LT2</strain>
    </source>
</reference>
<reference key="5">
    <citation type="journal article" date="2013" name="Microbiology">
        <title>A synthetic system for expression of components of a bacterial microcompartment.</title>
        <authorList>
            <person name="Sargent F."/>
            <person name="Davidson F.A."/>
            <person name="Kelly C.L."/>
            <person name="Binny R."/>
            <person name="Christodoulides N."/>
            <person name="Gibson D."/>
            <person name="Johansson E."/>
            <person name="Kozyrska K."/>
            <person name="Lado L.L."/>
            <person name="MacCallum J."/>
            <person name="Montague R."/>
            <person name="Ortmann B."/>
            <person name="Owen R."/>
            <person name="Coulthurst S.J."/>
            <person name="Dupuy L."/>
            <person name="Prescott A.R."/>
            <person name="Palmer T."/>
        </authorList>
    </citation>
    <scope>BIOTECHNOLOGY (ARTIFICIAL BMCS)</scope>
    <source>
        <strain>LT2</strain>
    </source>
</reference>
<reference key="6">
    <citation type="journal article" date="2015" name="PLoS Comput. Biol.">
        <title>Exploring bacterial organelle interactomes: a model of the protein-protein interaction network in the Pdu microcompartment.</title>
        <authorList>
            <person name="Jorda J."/>
            <person name="Liu Y."/>
            <person name="Bobik T.A."/>
            <person name="Yeates T.O."/>
        </authorList>
    </citation>
    <scope>INTERACTION WITH PDUV</scope>
    <scope>SUBCELLULAR LOCATION</scope>
    <source>
        <strain>LT2</strain>
    </source>
</reference>
<reference key="7">
    <citation type="journal article" date="2016" name="Sci. Rep.">
        <title>Engineering formation of multiple recombinant Eut protein nanocompartments in E. coli.</title>
        <authorList>
            <person name="Held M."/>
            <person name="Kolb A."/>
            <person name="Perdue S."/>
            <person name="Hsu S.Y."/>
            <person name="Bloch S.E."/>
            <person name="Quin M.B."/>
            <person name="Schmidt-Dannert C."/>
        </authorList>
    </citation>
    <scope>SUBCELLULAR LOCATION</scope>
    <source>
        <strain>LT2</strain>
    </source>
</reference>
<reference key="8">
    <citation type="journal article" date="2017" name="PLoS Comput. Biol.">
        <title>A systems-level model reveals that 1,2-Propanediol utilization microcompartments enhance pathway flux through intermediate sequestration.</title>
        <authorList>
            <person name="Jakobson C.M."/>
            <person name="Tullman-Ercek D."/>
            <person name="Slininger M.F."/>
            <person name="Mangan N.M."/>
        </authorList>
    </citation>
    <scope>SYSTEM-MODELING</scope>
    <scope>FUNCTION</scope>
    <source>
        <strain>LT2</strain>
    </source>
</reference>
<reference evidence="15" key="9">
    <citation type="journal article" date="2008" name="Structure">
        <title>Structure of the PduU shell protein from the Pdu microcompartment of Salmonella.</title>
        <authorList>
            <person name="Crowley C.S."/>
            <person name="Sawaya M.R."/>
            <person name="Bobik T.A."/>
            <person name="Yeates T.O."/>
        </authorList>
    </citation>
    <scope>X-RAY CRYSTALLOGRAPHY (1.80 ANGSTROMS)</scope>
    <scope>SUBUNIT</scope>
    <scope>DOMAIN</scope>
    <source>
        <strain>LT2</strain>
    </source>
</reference>
<evidence type="ECO:0000255" key="1">
    <source>
        <dbReference type="PROSITE-ProRule" id="PRU01279"/>
    </source>
</evidence>
<evidence type="ECO:0000269" key="2">
    <source>
    </source>
</evidence>
<evidence type="ECO:0000269" key="3">
    <source>
    </source>
</evidence>
<evidence type="ECO:0000269" key="4">
    <source>
    </source>
</evidence>
<evidence type="ECO:0000269" key="5">
    <source>
    </source>
</evidence>
<evidence type="ECO:0000269" key="6">
    <source>
    </source>
</evidence>
<evidence type="ECO:0000269" key="7">
    <source>
    </source>
</evidence>
<evidence type="ECO:0000269" key="8">
    <source>
    </source>
</evidence>
<evidence type="ECO:0000303" key="9">
    <source>
    </source>
</evidence>
<evidence type="ECO:0000303" key="10">
    <source>
    </source>
</evidence>
<evidence type="ECO:0000305" key="11"/>
<evidence type="ECO:0000305" key="12">
    <source>
    </source>
</evidence>
<evidence type="ECO:0000305" key="13">
    <source>
    </source>
</evidence>
<evidence type="ECO:0000305" key="14">
    <source>
    </source>
</evidence>
<evidence type="ECO:0007744" key="15">
    <source>
        <dbReference type="PDB" id="3CGI"/>
    </source>
</evidence>
<evidence type="ECO:0007829" key="16">
    <source>
        <dbReference type="PDB" id="3CGI"/>
    </source>
</evidence>
<accession>P0A1D1</accession>
<accession>Q9XDM7</accession>
<dbReference type="EMBL" id="AF026270">
    <property type="protein sequence ID" value="AAD39019.1"/>
    <property type="molecule type" value="Genomic_DNA"/>
</dbReference>
<dbReference type="EMBL" id="AE006468">
    <property type="protein sequence ID" value="AAL20959.1"/>
    <property type="molecule type" value="Genomic_DNA"/>
</dbReference>
<dbReference type="RefSeq" id="NP_461000.1">
    <property type="nucleotide sequence ID" value="NC_003197.2"/>
</dbReference>
<dbReference type="RefSeq" id="WP_000441103.1">
    <property type="nucleotide sequence ID" value="NC_003197.2"/>
</dbReference>
<dbReference type="PDB" id="3CGI">
    <property type="method" value="X-ray"/>
    <property type="resolution" value="1.80 A"/>
    <property type="chains" value="A/B/C/D=1-116"/>
</dbReference>
<dbReference type="PDBsum" id="3CGI"/>
<dbReference type="SMR" id="P0A1D1"/>
<dbReference type="STRING" id="99287.STM2055"/>
<dbReference type="PaxDb" id="99287-STM2055"/>
<dbReference type="GeneID" id="1253576"/>
<dbReference type="GeneID" id="97393738"/>
<dbReference type="KEGG" id="stm:STM2055"/>
<dbReference type="PATRIC" id="fig|99287.12.peg.2177"/>
<dbReference type="HOGENOM" id="CLU_143326_0_0_6"/>
<dbReference type="OMA" id="HIIPNPQ"/>
<dbReference type="PhylomeDB" id="P0A1D1"/>
<dbReference type="BioCyc" id="SENT99287:STM2055-MONOMER"/>
<dbReference type="UniPathway" id="UPA00621"/>
<dbReference type="EvolutionaryTrace" id="P0A1D1"/>
<dbReference type="Proteomes" id="UP000001014">
    <property type="component" value="Chromosome"/>
</dbReference>
<dbReference type="GO" id="GO:0031472">
    <property type="term" value="C:propanediol degradation polyhedral organelle"/>
    <property type="evidence" value="ECO:0000314"/>
    <property type="project" value="UniProtKB"/>
</dbReference>
<dbReference type="GO" id="GO:0051144">
    <property type="term" value="P:propanediol catabolic process"/>
    <property type="evidence" value="ECO:0007669"/>
    <property type="project" value="UniProtKB-UniPathway"/>
</dbReference>
<dbReference type="CDD" id="cd07046">
    <property type="entry name" value="BMC_PduU-EutS"/>
    <property type="match status" value="1"/>
</dbReference>
<dbReference type="Gene3D" id="3.30.70.1710">
    <property type="match status" value="1"/>
</dbReference>
<dbReference type="InterPro" id="IPR044870">
    <property type="entry name" value="BMC_CP"/>
</dbReference>
<dbReference type="InterPro" id="IPR000249">
    <property type="entry name" value="BMC_dom"/>
</dbReference>
<dbReference type="InterPro" id="IPR037233">
    <property type="entry name" value="CcmK-like_sf"/>
</dbReference>
<dbReference type="InterPro" id="IPR009307">
    <property type="entry name" value="EutS/PduU/CutR"/>
</dbReference>
<dbReference type="NCBIfam" id="NF012012">
    <property type="entry name" value="PRK15468.1"/>
    <property type="match status" value="1"/>
</dbReference>
<dbReference type="PANTHER" id="PTHR40449:SF2">
    <property type="entry name" value="BACTERIAL MICROCOMPARTMENT SHELL PROTEIN EUTS"/>
    <property type="match status" value="1"/>
</dbReference>
<dbReference type="PANTHER" id="PTHR40449">
    <property type="entry name" value="ETHANOLAMINE UTILIZATION PROTEIN EUTS"/>
    <property type="match status" value="1"/>
</dbReference>
<dbReference type="Pfam" id="PF00936">
    <property type="entry name" value="BMC"/>
    <property type="match status" value="1"/>
</dbReference>
<dbReference type="PIRSF" id="PIRSF012296">
    <property type="entry name" value="EutS_PduU"/>
    <property type="match status" value="1"/>
</dbReference>
<dbReference type="SMART" id="SM00877">
    <property type="entry name" value="BMC"/>
    <property type="match status" value="1"/>
</dbReference>
<dbReference type="SUPFAM" id="SSF143414">
    <property type="entry name" value="CcmK-like"/>
    <property type="match status" value="1"/>
</dbReference>
<dbReference type="PROSITE" id="PS51931">
    <property type="entry name" value="BMC_CP"/>
    <property type="match status" value="1"/>
</dbReference>
<proteinExistence type="evidence at protein level"/>
<protein>
    <recommendedName>
        <fullName evidence="10">Bacterial microcompartment shell protein PduU</fullName>
    </recommendedName>
    <alternativeName>
        <fullName evidence="11">Bacterial microcompartment protein homohexamer</fullName>
        <shortName evidence="11">BMC-H</shortName>
    </alternativeName>
    <alternativeName>
        <fullName>Propanediol utilization protein PduU</fullName>
    </alternativeName>
</protein>
<name>PDUU_SALTY</name>